<dbReference type="EC" id="3.5.4.16" evidence="2"/>
<dbReference type="EMBL" id="AE014074">
    <property type="protein sequence ID" value="AAM79366.1"/>
    <property type="status" value="ALT_INIT"/>
    <property type="molecule type" value="Genomic_DNA"/>
</dbReference>
<dbReference type="SMR" id="P0DB30"/>
<dbReference type="KEGG" id="spg:SpyM3_0759"/>
<dbReference type="HOGENOM" id="CLU_049768_3_3_9"/>
<dbReference type="UniPathway" id="UPA00848">
    <property type="reaction ID" value="UER00151"/>
</dbReference>
<dbReference type="Proteomes" id="UP000000564">
    <property type="component" value="Chromosome"/>
</dbReference>
<dbReference type="GO" id="GO:0005737">
    <property type="term" value="C:cytoplasm"/>
    <property type="evidence" value="ECO:0007669"/>
    <property type="project" value="TreeGrafter"/>
</dbReference>
<dbReference type="GO" id="GO:0005525">
    <property type="term" value="F:GTP binding"/>
    <property type="evidence" value="ECO:0007669"/>
    <property type="project" value="UniProtKB-KW"/>
</dbReference>
<dbReference type="GO" id="GO:0003934">
    <property type="term" value="F:GTP cyclohydrolase I activity"/>
    <property type="evidence" value="ECO:0007669"/>
    <property type="project" value="UniProtKB-UniRule"/>
</dbReference>
<dbReference type="GO" id="GO:0008270">
    <property type="term" value="F:zinc ion binding"/>
    <property type="evidence" value="ECO:0007669"/>
    <property type="project" value="UniProtKB-UniRule"/>
</dbReference>
<dbReference type="GO" id="GO:0006730">
    <property type="term" value="P:one-carbon metabolic process"/>
    <property type="evidence" value="ECO:0007669"/>
    <property type="project" value="UniProtKB-UniRule"/>
</dbReference>
<dbReference type="GO" id="GO:0006729">
    <property type="term" value="P:tetrahydrobiopterin biosynthetic process"/>
    <property type="evidence" value="ECO:0007669"/>
    <property type="project" value="TreeGrafter"/>
</dbReference>
<dbReference type="GO" id="GO:0046654">
    <property type="term" value="P:tetrahydrofolate biosynthetic process"/>
    <property type="evidence" value="ECO:0007669"/>
    <property type="project" value="UniProtKB-UniRule"/>
</dbReference>
<dbReference type="FunFam" id="1.10.286.10:FF:000001">
    <property type="entry name" value="GTP cyclohydrolase 1"/>
    <property type="match status" value="1"/>
</dbReference>
<dbReference type="FunFam" id="3.30.1130.10:FF:000001">
    <property type="entry name" value="GTP cyclohydrolase 1"/>
    <property type="match status" value="1"/>
</dbReference>
<dbReference type="Gene3D" id="1.10.286.10">
    <property type="match status" value="1"/>
</dbReference>
<dbReference type="Gene3D" id="3.30.1130.10">
    <property type="match status" value="1"/>
</dbReference>
<dbReference type="HAMAP" id="MF_00223">
    <property type="entry name" value="FolE"/>
    <property type="match status" value="1"/>
</dbReference>
<dbReference type="InterPro" id="IPR043133">
    <property type="entry name" value="GTP-CH-I_C/QueF"/>
</dbReference>
<dbReference type="InterPro" id="IPR043134">
    <property type="entry name" value="GTP-CH-I_N"/>
</dbReference>
<dbReference type="InterPro" id="IPR001474">
    <property type="entry name" value="GTP_CycHdrlase_I"/>
</dbReference>
<dbReference type="InterPro" id="IPR018234">
    <property type="entry name" value="GTP_CycHdrlase_I_CS"/>
</dbReference>
<dbReference type="InterPro" id="IPR020602">
    <property type="entry name" value="GTP_CycHdrlase_I_dom"/>
</dbReference>
<dbReference type="NCBIfam" id="TIGR00063">
    <property type="entry name" value="folE"/>
    <property type="match status" value="1"/>
</dbReference>
<dbReference type="NCBIfam" id="NF006825">
    <property type="entry name" value="PRK09347.1-2"/>
    <property type="match status" value="1"/>
</dbReference>
<dbReference type="NCBIfam" id="NF006826">
    <property type="entry name" value="PRK09347.1-3"/>
    <property type="match status" value="1"/>
</dbReference>
<dbReference type="PANTHER" id="PTHR11109:SF7">
    <property type="entry name" value="GTP CYCLOHYDROLASE 1"/>
    <property type="match status" value="1"/>
</dbReference>
<dbReference type="PANTHER" id="PTHR11109">
    <property type="entry name" value="GTP CYCLOHYDROLASE I"/>
    <property type="match status" value="1"/>
</dbReference>
<dbReference type="Pfam" id="PF01227">
    <property type="entry name" value="GTP_cyclohydroI"/>
    <property type="match status" value="1"/>
</dbReference>
<dbReference type="SUPFAM" id="SSF55620">
    <property type="entry name" value="Tetrahydrobiopterin biosynthesis enzymes-like"/>
    <property type="match status" value="1"/>
</dbReference>
<dbReference type="PROSITE" id="PS00859">
    <property type="entry name" value="GTP_CYCLOHYDROL_1_1"/>
    <property type="match status" value="1"/>
</dbReference>
<dbReference type="PROSITE" id="PS00860">
    <property type="entry name" value="GTP_CYCLOHYDROL_1_2"/>
    <property type="match status" value="1"/>
</dbReference>
<reference key="1">
    <citation type="journal article" date="2002" name="Proc. Natl. Acad. Sci. U.S.A.">
        <title>Genome sequence of a serotype M3 strain of group A Streptococcus: phage-encoded toxins, the high-virulence phenotype, and clone emergence.</title>
        <authorList>
            <person name="Beres S.B."/>
            <person name="Sylva G.L."/>
            <person name="Barbian K.D."/>
            <person name="Lei B."/>
            <person name="Hoff J.S."/>
            <person name="Mammarella N.D."/>
            <person name="Liu M.-Y."/>
            <person name="Smoot J.C."/>
            <person name="Porcella S.F."/>
            <person name="Parkins L.D."/>
            <person name="Campbell D.S."/>
            <person name="Smith T.M."/>
            <person name="McCormick J.K."/>
            <person name="Leung D.Y.M."/>
            <person name="Schlievert P.M."/>
            <person name="Musser J.M."/>
        </authorList>
    </citation>
    <scope>NUCLEOTIDE SEQUENCE [LARGE SCALE GENOMIC DNA]</scope>
    <source>
        <strain>ATCC BAA-595 / MGAS315</strain>
    </source>
</reference>
<protein>
    <recommendedName>
        <fullName evidence="2">GTP cyclohydrolase 1</fullName>
        <ecNumber evidence="2">3.5.4.16</ecNumber>
    </recommendedName>
    <alternativeName>
        <fullName evidence="2">GTP cyclohydrolase I</fullName>
        <shortName evidence="2">GTP-CH-I</shortName>
    </alternativeName>
</protein>
<keyword id="KW-0342">GTP-binding</keyword>
<keyword id="KW-0378">Hydrolase</keyword>
<keyword id="KW-0479">Metal-binding</keyword>
<keyword id="KW-0547">Nucleotide-binding</keyword>
<keyword id="KW-0554">One-carbon metabolism</keyword>
<keyword id="KW-0862">Zinc</keyword>
<gene>
    <name evidence="2" type="primary">folE</name>
    <name type="ordered locus">SpyM3_0759</name>
</gene>
<feature type="chain" id="PRO_0000119453" description="GTP cyclohydrolase 1">
    <location>
        <begin position="1"/>
        <end position="194"/>
    </location>
</feature>
<feature type="binding site" evidence="2">
    <location>
        <position position="83"/>
    </location>
    <ligand>
        <name>Zn(2+)</name>
        <dbReference type="ChEBI" id="CHEBI:29105"/>
    </ligand>
</feature>
<feature type="binding site" evidence="2">
    <location>
        <position position="86"/>
    </location>
    <ligand>
        <name>Zn(2+)</name>
        <dbReference type="ChEBI" id="CHEBI:29105"/>
    </ligand>
</feature>
<feature type="binding site" evidence="2">
    <location>
        <position position="155"/>
    </location>
    <ligand>
        <name>Zn(2+)</name>
        <dbReference type="ChEBI" id="CHEBI:29105"/>
    </ligand>
</feature>
<proteinExistence type="inferred from homology"/>
<name>GCH1_STRP3</name>
<evidence type="ECO:0000250" key="1"/>
<evidence type="ECO:0000255" key="2">
    <source>
        <dbReference type="HAMAP-Rule" id="MF_00223"/>
    </source>
</evidence>
<evidence type="ECO:0000305" key="3"/>
<sequence length="194" mass="21866">MKRERLMSINKEKAEAAIYQFLEAIGENPNREGLLDTPKRVAKMYAEMFLGLGKDPKEEFTAVFKEHHEDVVIVKDISFYSVCEHHLVPFYGKAHIAYLPSDGRVTGLSKLARAVEVASKRPQLQERLTSQIADALVEALNPKGTLVMVEAEHMCMTMRGIKKPGSKTITTTARGLYKESRAERQEVISLMTKD</sequence>
<comment type="catalytic activity">
    <reaction evidence="2">
        <text>GTP + H2O = 7,8-dihydroneopterin 3'-triphosphate + formate + H(+)</text>
        <dbReference type="Rhea" id="RHEA:17473"/>
        <dbReference type="ChEBI" id="CHEBI:15377"/>
        <dbReference type="ChEBI" id="CHEBI:15378"/>
        <dbReference type="ChEBI" id="CHEBI:15740"/>
        <dbReference type="ChEBI" id="CHEBI:37565"/>
        <dbReference type="ChEBI" id="CHEBI:58462"/>
        <dbReference type="EC" id="3.5.4.16"/>
    </reaction>
</comment>
<comment type="pathway">
    <text evidence="2">Cofactor biosynthesis; 7,8-dihydroneopterin triphosphate biosynthesis; 7,8-dihydroneopterin triphosphate from GTP: step 1/1.</text>
</comment>
<comment type="subunit">
    <text evidence="1">Toroid-shaped homodecamer, composed of two pentamers of five dimers.</text>
</comment>
<comment type="similarity">
    <text evidence="2">Belongs to the GTP cyclohydrolase I family.</text>
</comment>
<comment type="sequence caution" evidence="3">
    <conflict type="erroneous initiation">
        <sequence resource="EMBL-CDS" id="AAM79366"/>
    </conflict>
</comment>
<accession>P0DB30</accession>
<accession>Q8K7K9</accession>
<organism>
    <name type="scientific">Streptococcus pyogenes serotype M3 (strain ATCC BAA-595 / MGAS315)</name>
    <dbReference type="NCBI Taxonomy" id="198466"/>
    <lineage>
        <taxon>Bacteria</taxon>
        <taxon>Bacillati</taxon>
        <taxon>Bacillota</taxon>
        <taxon>Bacilli</taxon>
        <taxon>Lactobacillales</taxon>
        <taxon>Streptococcaceae</taxon>
        <taxon>Streptococcus</taxon>
    </lineage>
</organism>